<accession>O58247</accession>
<reference key="1">
    <citation type="journal article" date="1998" name="DNA Res.">
        <title>Complete sequence and gene organization of the genome of a hyper-thermophilic archaebacterium, Pyrococcus horikoshii OT3.</title>
        <authorList>
            <person name="Kawarabayasi Y."/>
            <person name="Sawada M."/>
            <person name="Horikawa H."/>
            <person name="Haikawa Y."/>
            <person name="Hino Y."/>
            <person name="Yamamoto S."/>
            <person name="Sekine M."/>
            <person name="Baba S."/>
            <person name="Kosugi H."/>
            <person name="Hosoyama A."/>
            <person name="Nagai Y."/>
            <person name="Sakai M."/>
            <person name="Ogura K."/>
            <person name="Otsuka R."/>
            <person name="Nakazawa H."/>
            <person name="Takamiya M."/>
            <person name="Ohfuku Y."/>
            <person name="Funahashi T."/>
            <person name="Tanaka T."/>
            <person name="Kudoh Y."/>
            <person name="Yamazaki J."/>
            <person name="Kushida N."/>
            <person name="Oguchi A."/>
            <person name="Aoki K."/>
            <person name="Yoshizawa T."/>
            <person name="Nakamura Y."/>
            <person name="Robb F.T."/>
            <person name="Horikoshi K."/>
            <person name="Masuchi Y."/>
            <person name="Shizuya H."/>
            <person name="Kikuchi H."/>
        </authorList>
    </citation>
    <scope>NUCLEOTIDE SEQUENCE [LARGE SCALE GENOMIC DNA]</scope>
    <source>
        <strain>ATCC 700860 / DSM 12428 / JCM 9974 / NBRC 100139 / OT-3</strain>
    </source>
</reference>
<reference key="2">
    <citation type="journal article" date="2006" name="Biotechnol. Lett.">
        <title>Cloning, expression and characterization of a thermostable exo-beta-D-glucosaminidase from the hyperthermophilic archaeon Pyrococcus horikoshii.</title>
        <authorList>
            <person name="Liu B."/>
            <person name="Li Z."/>
            <person name="Hong Y."/>
            <person name="Ni J."/>
            <person name="Sheng D."/>
            <person name="Shen Y."/>
        </authorList>
    </citation>
    <scope>FUNCTION</scope>
    <scope>BIOPHYSICOCHEMICAL PROPERTIES</scope>
    <scope>PATHWAY</scope>
    <scope>SUBUNIT</scope>
    <source>
        <strain>ATCC 700860 / DSM 12428 / JCM 9974 / NBRC 100139 / OT-3</strain>
    </source>
</reference>
<reference evidence="8" key="3">
    <citation type="journal article" date="2017" name="J. Biol. Chem.">
        <title>The structure of an archaeal beta-glucosaminidase provides insight into glycoside hydrolase evolution.</title>
        <authorList>
            <person name="Mine S."/>
            <person name="Watanabe M."/>
            <person name="Kamachi S."/>
            <person name="Abe Y."/>
            <person name="Ueda T."/>
        </authorList>
    </citation>
    <scope>X-RAY CRYSTALLOGRAPHY (2.60 ANGSTROMS)</scope>
    <scope>FUNCTION</scope>
    <scope>CATALYTIC ACTIVITY</scope>
    <scope>SUBUNIT</scope>
    <scope>MUTAGENESIS OF ASP-180; GLU-181; GLU-308 AND GLU-349</scope>
</reference>
<organism>
    <name type="scientific">Pyrococcus horikoshii (strain ATCC 700860 / DSM 12428 / JCM 9974 / NBRC 100139 / OT-3)</name>
    <dbReference type="NCBI Taxonomy" id="70601"/>
    <lineage>
        <taxon>Archaea</taxon>
        <taxon>Methanobacteriati</taxon>
        <taxon>Methanobacteriota</taxon>
        <taxon>Thermococci</taxon>
        <taxon>Thermococcales</taxon>
        <taxon>Thermococcaceae</taxon>
        <taxon>Pyrococcus</taxon>
    </lineage>
</organism>
<sequence length="778" mass="91169">MVGMKVQHDGRLYSLDDERIVVYGGTLQYFRVPRNYWEDRLRKMKSHGLNTVETYIAWNWHEPQEGVFDFTGETHPQRDLIGFLELAQKLGLYVIIRPGPYICGEWKNGGIPDWLINSHPEILAKSPNGSFPRDVYYPPITYLHPTYLEYAMKWYEEVLPIIRDYLYSNGGSIISVTIDDEPSYWETIFQPFLTDYNEIIVRENGIWHSWLKENYSLGDLEERYGERFSDYTEIAPPKSFSEPLPKVLDWHHFKIWMINEYVRRLYEKIREYVDVPISLLDPYLLLAAWKEFYLYVTRHKLDIHLWTEFWYSFYRTFDFKEDKLGHLYFKTGIYRYYVSKLKTPPLSIETQASLANVIEKDEAELLYALLPALGIHNLNYYLYVGGENPRGYESHNGVTWDVYSPIGLDGRERQHVEPIKWIGEFLKSNIDFVDSQFKARVAFGMYEPYEALNLWGYKPESFEESVNLNEYLFGERGLLTLLAMSNVPFDVIDLEISTLEEMLQYEQIWVYSLDFMSREVQEKLIKYVEEGGNLVILPTLPYLDENMKPCTRLRDFLGVEVERAKARDNMRLIPYLSVDAEGIDRMVVRNVAREVKGGEAIAWIGDKVVGTIVRKGKGSAVILGFRLQYYSSYHDMHRKFVDKILQLQGVKREVEVSNRDIIAIPRIHYLVLVNPRDEEVAGKVKYRGVEFEIKMKGRGVLFIPVDVEINGVKLVYATATPIGGGNRRIKFRNHLSDTSEIAIRDGRIRGVKGGYVLQEKGERVYVIRHERETFEIEF</sequence>
<name>GLMA_PYRHO</name>
<protein>
    <recommendedName>
        <fullName evidence="4">Exo-beta-D-glucosaminidase</fullName>
        <ecNumber evidence="3">3.2.1.-</ecNumber>
    </recommendedName>
    <alternativeName>
        <fullName evidence="4">GlcNase</fullName>
    </alternativeName>
</protein>
<feature type="chain" id="PRO_0000449120" description="Exo-beta-D-glucosaminidase">
    <location>
        <begin position="1"/>
        <end position="778"/>
    </location>
</feature>
<feature type="active site" description="Proton donor" evidence="1">
    <location>
        <position position="181"/>
    </location>
</feature>
<feature type="active site" description="Nucleophile" evidence="1">
    <location>
        <position position="349"/>
    </location>
</feature>
<feature type="binding site" evidence="1">
    <location>
        <position position="55"/>
    </location>
    <ligand>
        <name>substrate</name>
    </ligand>
</feature>
<feature type="binding site" evidence="1">
    <location>
        <begin position="104"/>
        <end position="105"/>
    </location>
    <ligand>
        <name>substrate</name>
    </ligand>
</feature>
<feature type="binding site" evidence="1">
    <location>
        <begin position="180"/>
        <end position="181"/>
    </location>
    <ligand>
        <name>substrate</name>
    </ligand>
</feature>
<feature type="binding site" evidence="1">
    <location>
        <position position="308"/>
    </location>
    <ligand>
        <name>substrate</name>
    </ligand>
</feature>
<feature type="binding site" evidence="1">
    <location>
        <position position="349"/>
    </location>
    <ligand>
        <name>substrate</name>
    </ligand>
</feature>
<feature type="binding site" evidence="1">
    <location>
        <position position="381"/>
    </location>
    <ligand>
        <name>substrate</name>
    </ligand>
</feature>
<feature type="mutagenesis site" description="Loss of activity." evidence="3">
    <original>D</original>
    <variation>N</variation>
    <location>
        <position position="180"/>
    </location>
</feature>
<feature type="mutagenesis site" description="Retains 10% of wild-type activity." evidence="3">
    <original>E</original>
    <variation>Q</variation>
    <location>
        <position position="181"/>
    </location>
</feature>
<feature type="mutagenesis site" description="Retains 15% of wild-type activity." evidence="3">
    <original>E</original>
    <variation>Q</variation>
    <location>
        <position position="308"/>
    </location>
</feature>
<feature type="mutagenesis site" description="Loss of activity." evidence="3">
    <original>E</original>
    <variation>Q</variation>
    <location>
        <position position="349"/>
    </location>
</feature>
<feature type="strand" evidence="9">
    <location>
        <begin position="6"/>
        <end position="8"/>
    </location>
</feature>
<feature type="strand" evidence="9">
    <location>
        <begin position="13"/>
        <end position="15"/>
    </location>
</feature>
<feature type="strand" evidence="9">
    <location>
        <begin position="23"/>
        <end position="26"/>
    </location>
</feature>
<feature type="helix" evidence="9">
    <location>
        <begin position="29"/>
        <end position="31"/>
    </location>
</feature>
<feature type="helix" evidence="9">
    <location>
        <begin position="34"/>
        <end position="36"/>
    </location>
</feature>
<feature type="helix" evidence="9">
    <location>
        <begin position="37"/>
        <end position="46"/>
    </location>
</feature>
<feature type="strand" evidence="9">
    <location>
        <begin position="51"/>
        <end position="55"/>
    </location>
</feature>
<feature type="helix" evidence="9">
    <location>
        <begin position="58"/>
        <end position="61"/>
    </location>
</feature>
<feature type="strand" evidence="9">
    <location>
        <begin position="70"/>
        <end position="74"/>
    </location>
</feature>
<feature type="helix" evidence="9">
    <location>
        <begin position="76"/>
        <end position="78"/>
    </location>
</feature>
<feature type="helix" evidence="9">
    <location>
        <begin position="80"/>
        <end position="89"/>
    </location>
</feature>
<feature type="strand" evidence="9">
    <location>
        <begin position="93"/>
        <end position="100"/>
    </location>
</feature>
<feature type="helix" evidence="9">
    <location>
        <begin position="107"/>
        <end position="110"/>
    </location>
</feature>
<feature type="helix" evidence="9">
    <location>
        <begin position="113"/>
        <end position="117"/>
    </location>
</feature>
<feature type="strand" evidence="9">
    <location>
        <begin position="135"/>
        <end position="137"/>
    </location>
</feature>
<feature type="helix" evidence="9">
    <location>
        <begin position="145"/>
        <end position="164"/>
    </location>
</feature>
<feature type="helix" evidence="9">
    <location>
        <begin position="167"/>
        <end position="169"/>
    </location>
</feature>
<feature type="strand" evidence="9">
    <location>
        <begin position="171"/>
        <end position="181"/>
    </location>
</feature>
<feature type="turn" evidence="9">
    <location>
        <begin position="184"/>
        <end position="189"/>
    </location>
</feature>
<feature type="turn" evidence="9">
    <location>
        <begin position="198"/>
        <end position="201"/>
    </location>
</feature>
<feature type="helix" evidence="9">
    <location>
        <begin position="208"/>
        <end position="214"/>
    </location>
</feature>
<feature type="turn" evidence="9">
    <location>
        <begin position="217"/>
        <end position="219"/>
    </location>
</feature>
<feature type="helix" evidence="9">
    <location>
        <begin position="220"/>
        <end position="223"/>
    </location>
</feature>
<feature type="strand" evidence="9">
    <location>
        <begin position="224"/>
        <end position="226"/>
    </location>
</feature>
<feature type="helix" evidence="9">
    <location>
        <begin position="231"/>
        <end position="233"/>
    </location>
</feature>
<feature type="helix" evidence="9">
    <location>
        <begin position="244"/>
        <end position="270"/>
    </location>
</feature>
<feature type="strand" evidence="9">
    <location>
        <begin position="277"/>
        <end position="281"/>
    </location>
</feature>
<feature type="helix" evidence="9">
    <location>
        <begin position="282"/>
        <end position="284"/>
    </location>
</feature>
<feature type="helix" evidence="9">
    <location>
        <begin position="289"/>
        <end position="299"/>
    </location>
</feature>
<feature type="strand" evidence="9">
    <location>
        <begin position="303"/>
        <end position="309"/>
    </location>
</feature>
<feature type="strand" evidence="9">
    <location>
        <begin position="313"/>
        <end position="315"/>
    </location>
</feature>
<feature type="helix" evidence="9">
    <location>
        <begin position="321"/>
        <end position="323"/>
    </location>
</feature>
<feature type="helix" evidence="9">
    <location>
        <begin position="324"/>
        <end position="340"/>
    </location>
</feature>
<feature type="strand" evidence="9">
    <location>
        <begin position="346"/>
        <end position="351"/>
    </location>
</feature>
<feature type="strand" evidence="9">
    <location>
        <begin position="353"/>
        <end position="356"/>
    </location>
</feature>
<feature type="helix" evidence="9">
    <location>
        <begin position="360"/>
        <end position="372"/>
    </location>
</feature>
<feature type="strand" evidence="9">
    <location>
        <begin position="377"/>
        <end position="381"/>
    </location>
</feature>
<feature type="turn" evidence="9">
    <location>
        <begin position="395"/>
        <end position="398"/>
    </location>
</feature>
<feature type="helix" evidence="9">
    <location>
        <begin position="416"/>
        <end position="428"/>
    </location>
</feature>
<feature type="helix" evidence="9">
    <location>
        <begin position="430"/>
        <end position="433"/>
    </location>
</feature>
<feature type="strand" evidence="9">
    <location>
        <begin position="440"/>
        <end position="445"/>
    </location>
</feature>
<feature type="helix" evidence="9">
    <location>
        <begin position="448"/>
        <end position="455"/>
    </location>
</feature>
<feature type="helix" evidence="9">
    <location>
        <begin position="468"/>
        <end position="471"/>
    </location>
</feature>
<feature type="strand" evidence="9">
    <location>
        <begin position="474"/>
        <end position="477"/>
    </location>
</feature>
<feature type="helix" evidence="9">
    <location>
        <begin position="478"/>
        <end position="484"/>
    </location>
</feature>
<feature type="strand" evidence="9">
    <location>
        <begin position="490"/>
        <end position="493"/>
    </location>
</feature>
<feature type="turn" evidence="9">
    <location>
        <begin position="494"/>
        <end position="496"/>
    </location>
</feature>
<feature type="helix" evidence="9">
    <location>
        <begin position="499"/>
        <end position="502"/>
    </location>
</feature>
<feature type="strand" evidence="9">
    <location>
        <begin position="506"/>
        <end position="511"/>
    </location>
</feature>
<feature type="helix" evidence="9">
    <location>
        <begin position="518"/>
        <end position="530"/>
    </location>
</feature>
<feature type="strand" evidence="9">
    <location>
        <begin position="533"/>
        <end position="538"/>
    </location>
</feature>
<feature type="helix" evidence="9">
    <location>
        <begin position="552"/>
        <end position="557"/>
    </location>
</feature>
<feature type="turn" evidence="9">
    <location>
        <begin position="570"/>
        <end position="572"/>
    </location>
</feature>
<feature type="strand" evidence="9">
    <location>
        <begin position="575"/>
        <end position="580"/>
    </location>
</feature>
<feature type="strand" evidence="9">
    <location>
        <begin position="583"/>
        <end position="590"/>
    </location>
</feature>
<feature type="strand" evidence="9">
    <location>
        <begin position="595"/>
        <end position="604"/>
    </location>
</feature>
<feature type="strand" evidence="9">
    <location>
        <begin position="607"/>
        <end position="615"/>
    </location>
</feature>
<feature type="strand" evidence="9">
    <location>
        <begin position="618"/>
        <end position="626"/>
    </location>
</feature>
<feature type="helix" evidence="9">
    <location>
        <begin position="636"/>
        <end position="647"/>
    </location>
</feature>
<feature type="strand" evidence="9">
    <location>
        <begin position="653"/>
        <end position="658"/>
    </location>
</feature>
<feature type="strand" evidence="9">
    <location>
        <begin position="661"/>
        <end position="666"/>
    </location>
</feature>
<feature type="strand" evidence="9">
    <location>
        <begin position="669"/>
        <end position="674"/>
    </location>
</feature>
<feature type="strand" evidence="9">
    <location>
        <begin position="676"/>
        <end position="678"/>
    </location>
</feature>
<feature type="strand" evidence="9">
    <location>
        <begin position="680"/>
        <end position="686"/>
    </location>
</feature>
<feature type="strand" evidence="9">
    <location>
        <begin position="689"/>
        <end position="695"/>
    </location>
</feature>
<feature type="strand" evidence="9">
    <location>
        <begin position="697"/>
        <end position="709"/>
    </location>
</feature>
<feature type="strand" evidence="9">
    <location>
        <begin position="712"/>
        <end position="725"/>
    </location>
</feature>
<feature type="strand" evidence="9">
    <location>
        <begin position="728"/>
        <end position="732"/>
    </location>
</feature>
<feature type="strand" evidence="9">
    <location>
        <begin position="737"/>
        <end position="745"/>
    </location>
</feature>
<feature type="strand" evidence="9">
    <location>
        <begin position="750"/>
        <end position="759"/>
    </location>
</feature>
<feature type="strand" evidence="9">
    <location>
        <begin position="761"/>
        <end position="777"/>
    </location>
</feature>
<keyword id="KW-0002">3D-structure</keyword>
<keyword id="KW-0963">Cytoplasm</keyword>
<keyword id="KW-0326">Glycosidase</keyword>
<keyword id="KW-0378">Hydrolase</keyword>
<gene>
    <name evidence="5" type="primary">glmA</name>
    <name evidence="7" type="ordered locus">PH0511</name>
</gene>
<comment type="function">
    <text evidence="2 3">Exo-type enzyme that specifically cleaves the non-reducing terminal glycosidic bond of chitooligosaccharides (PubMed:16912928, PubMed:28130448). Catalyzes the hydrolysis of GlcN-GlcNAc to glucosamine (GlcN) and N-acetylglucosamine (GlcNAc) (PubMed:28130448). Involved in chitin degradation (PubMed:16912928). Can also hydrolyze chitosan and chitooligosaccharides of various chain lengths (PubMed:16912928).</text>
</comment>
<comment type="catalytic activity">
    <reaction evidence="3">
        <text>beta-D-glucosaminyl-(1-&gt;4)-N-acetyl-D-glucosamine + H2O = D-glucosamine + N-acetyl-D-glucosamine</text>
        <dbReference type="Rhea" id="RHEA:62164"/>
        <dbReference type="ChEBI" id="CHEBI:15377"/>
        <dbReference type="ChEBI" id="CHEBI:58723"/>
        <dbReference type="ChEBI" id="CHEBI:145478"/>
        <dbReference type="ChEBI" id="CHEBI:506227"/>
    </reaction>
</comment>
<comment type="biophysicochemical properties">
    <phDependence>
        <text evidence="2">Optimum pH is 6.</text>
    </phDependence>
    <temperatureDependence>
        <text evidence="2">Optimum temperature is 90 degrees Celsius.</text>
    </temperatureDependence>
</comment>
<comment type="pathway">
    <text evidence="2">Glycan degradation; chitin degradation.</text>
</comment>
<comment type="subunit">
    <text evidence="2 3">Homodimer.</text>
</comment>
<comment type="subcellular location">
    <subcellularLocation>
        <location evidence="1">Cytoplasm</location>
    </subcellularLocation>
</comment>
<comment type="similarity">
    <text evidence="6">Belongs to the glycosyl hydrolase 35 family.</text>
</comment>
<proteinExistence type="evidence at protein level"/>
<evidence type="ECO:0000250" key="1">
    <source>
        <dbReference type="UniProtKB" id="Q76HN4"/>
    </source>
</evidence>
<evidence type="ECO:0000269" key="2">
    <source>
    </source>
</evidence>
<evidence type="ECO:0000269" key="3">
    <source>
    </source>
</evidence>
<evidence type="ECO:0000303" key="4">
    <source>
    </source>
</evidence>
<evidence type="ECO:0000303" key="5">
    <source>
    </source>
</evidence>
<evidence type="ECO:0000305" key="6"/>
<evidence type="ECO:0000312" key="7">
    <source>
        <dbReference type="EMBL" id="BAA29599.1"/>
    </source>
</evidence>
<evidence type="ECO:0007744" key="8">
    <source>
        <dbReference type="PDB" id="5GSL"/>
    </source>
</evidence>
<evidence type="ECO:0007829" key="9">
    <source>
        <dbReference type="PDB" id="5GSL"/>
    </source>
</evidence>
<dbReference type="EC" id="3.2.1.-" evidence="3"/>
<dbReference type="EMBL" id="BA000001">
    <property type="protein sequence ID" value="BAA29599.1"/>
    <property type="molecule type" value="Genomic_DNA"/>
</dbReference>
<dbReference type="PIR" id="B71164">
    <property type="entry name" value="B71164"/>
</dbReference>
<dbReference type="PDB" id="5GSL">
    <property type="method" value="X-ray"/>
    <property type="resolution" value="2.60 A"/>
    <property type="chains" value="A/B=1-778"/>
</dbReference>
<dbReference type="PDBsum" id="5GSL"/>
<dbReference type="SMR" id="O58247"/>
<dbReference type="STRING" id="70601.gene:9377445"/>
<dbReference type="CAZy" id="GH35">
    <property type="family name" value="Glycoside Hydrolase Family 35"/>
</dbReference>
<dbReference type="EnsemblBacteria" id="BAA29599">
    <property type="protein sequence ID" value="BAA29599"/>
    <property type="gene ID" value="BAA29599"/>
</dbReference>
<dbReference type="KEGG" id="pho:PH0511"/>
<dbReference type="eggNOG" id="arCOG05856">
    <property type="taxonomic scope" value="Archaea"/>
</dbReference>
<dbReference type="UniPathway" id="UPA00349"/>
<dbReference type="Proteomes" id="UP000000752">
    <property type="component" value="Chromosome"/>
</dbReference>
<dbReference type="GO" id="GO:0009341">
    <property type="term" value="C:beta-galactosidase complex"/>
    <property type="evidence" value="ECO:0007669"/>
    <property type="project" value="InterPro"/>
</dbReference>
<dbReference type="GO" id="GO:0005737">
    <property type="term" value="C:cytoplasm"/>
    <property type="evidence" value="ECO:0007669"/>
    <property type="project" value="UniProtKB-SubCell"/>
</dbReference>
<dbReference type="GO" id="GO:0102277">
    <property type="term" value="F:2-acetamido-4-O-(2-amino-2-deoxy-beta-D-glucopyranosyl)-2-deoxy-D-glucose exo-beta-D-glucosaminidase activity"/>
    <property type="evidence" value="ECO:0007669"/>
    <property type="project" value="RHEA"/>
</dbReference>
<dbReference type="GO" id="GO:0004565">
    <property type="term" value="F:beta-galactosidase activity"/>
    <property type="evidence" value="ECO:0007669"/>
    <property type="project" value="InterPro"/>
</dbReference>
<dbReference type="GO" id="GO:0005975">
    <property type="term" value="P:carbohydrate metabolic process"/>
    <property type="evidence" value="ECO:0007669"/>
    <property type="project" value="InterPro"/>
</dbReference>
<dbReference type="GO" id="GO:0006032">
    <property type="term" value="P:chitin catabolic process"/>
    <property type="evidence" value="ECO:0007669"/>
    <property type="project" value="UniProtKB-UniPathway"/>
</dbReference>
<dbReference type="CDD" id="cd03143">
    <property type="entry name" value="A4_beta-galactosidase_middle_domain"/>
    <property type="match status" value="1"/>
</dbReference>
<dbReference type="Gene3D" id="3.40.50.880">
    <property type="match status" value="1"/>
</dbReference>
<dbReference type="Gene3D" id="3.20.20.80">
    <property type="entry name" value="Glycosidases"/>
    <property type="match status" value="1"/>
</dbReference>
<dbReference type="InterPro" id="IPR029062">
    <property type="entry name" value="Class_I_gatase-like"/>
</dbReference>
<dbReference type="InterPro" id="IPR053516">
    <property type="entry name" value="GLMA"/>
</dbReference>
<dbReference type="InterPro" id="IPR054747">
    <property type="entry name" value="GLMA-like_C"/>
</dbReference>
<dbReference type="InterPro" id="IPR054746">
    <property type="entry name" value="GLMA-like_second"/>
</dbReference>
<dbReference type="InterPro" id="IPR013529">
    <property type="entry name" value="Glyco_hydro_42_N"/>
</dbReference>
<dbReference type="InterPro" id="IPR001944">
    <property type="entry name" value="Glycoside_Hdrlase_35"/>
</dbReference>
<dbReference type="InterPro" id="IPR017853">
    <property type="entry name" value="Glycoside_hydrolase_SF"/>
</dbReference>
<dbReference type="NCBIfam" id="NF041127">
    <property type="entry name" value="exo_beta_glucsam"/>
    <property type="match status" value="1"/>
</dbReference>
<dbReference type="PANTHER" id="PTHR23421">
    <property type="entry name" value="BETA-GALACTOSIDASE RELATED"/>
    <property type="match status" value="1"/>
</dbReference>
<dbReference type="Pfam" id="PF22369">
    <property type="entry name" value="GLMA_2nd"/>
    <property type="match status" value="1"/>
</dbReference>
<dbReference type="Pfam" id="PF22345">
    <property type="entry name" value="GLMA_C"/>
    <property type="match status" value="1"/>
</dbReference>
<dbReference type="Pfam" id="PF02449">
    <property type="entry name" value="Glyco_hydro_42"/>
    <property type="match status" value="1"/>
</dbReference>
<dbReference type="PRINTS" id="PR00742">
    <property type="entry name" value="GLHYDRLASE35"/>
</dbReference>
<dbReference type="SUPFAM" id="SSF51445">
    <property type="entry name" value="(Trans)glycosidases"/>
    <property type="match status" value="1"/>
</dbReference>
<dbReference type="SUPFAM" id="SSF52317">
    <property type="entry name" value="Class I glutamine amidotransferase-like"/>
    <property type="match status" value="1"/>
</dbReference>